<accession>A1VYF1</accession>
<name>GPMI_CAMJJ</name>
<keyword id="KW-0324">Glycolysis</keyword>
<keyword id="KW-0413">Isomerase</keyword>
<keyword id="KW-0464">Manganese</keyword>
<keyword id="KW-0479">Metal-binding</keyword>
<protein>
    <recommendedName>
        <fullName evidence="1">2,3-bisphosphoglycerate-independent phosphoglycerate mutase</fullName>
        <shortName evidence="1">BPG-independent PGAM</shortName>
        <shortName evidence="1">Phosphoglyceromutase</shortName>
        <shortName evidence="1">iPGM</shortName>
        <ecNumber evidence="1">5.4.2.12</ecNumber>
    </recommendedName>
</protein>
<organism>
    <name type="scientific">Campylobacter jejuni subsp. jejuni serotype O:23/36 (strain 81-176)</name>
    <dbReference type="NCBI Taxonomy" id="354242"/>
    <lineage>
        <taxon>Bacteria</taxon>
        <taxon>Pseudomonadati</taxon>
        <taxon>Campylobacterota</taxon>
        <taxon>Epsilonproteobacteria</taxon>
        <taxon>Campylobacterales</taxon>
        <taxon>Campylobacteraceae</taxon>
        <taxon>Campylobacter</taxon>
    </lineage>
</organism>
<sequence length="492" mass="55644">MKQKCVLIITDGIGYNKNSKFNAFEAAKKPSYEKLFKEVPNSLLKTSGLAVGLPEGQMGNSEVGHMCIGSGRIIYQNLVRINKAIENKELEKNENLQKLLAKCKRVHIIGLYSDGGVHSMDTHFKAMLEICAKNGNEVFAHAITDGRDVNPKSGLNFIKDLKEFCENLGVHFATLCGRFYAMDRDKRWDRVKECYECLLGKAYKVPNLLEYLQKSYDENVTDEFIKAVQNENYKGMREEDGIIFINFRNDRMKQLVEVLNSKDFKEFEREKIFENLLTMSVYDDKFKLPVLFEKEKIENTLAQVISKAGLSQLHTAETEKYAHVTFFFNGGKEELLENETRVLIPSPKVKTYDEKPQMSAFEVCDAVKKGIEKGEDFIVVNFANGDMVGHTGDFNAAIKAVEAVDTCLGEIVECAKKHDYAFIITSDHGNCEAMQDEKGNLLTNHTTFDVFVFVQAKGVSKIKDNMGLSNIAASVLKILDLEIPKEMNEALF</sequence>
<feature type="chain" id="PRO_1000063952" description="2,3-bisphosphoglycerate-independent phosphoglycerate mutase">
    <location>
        <begin position="1"/>
        <end position="492"/>
    </location>
</feature>
<feature type="active site" description="Phosphoserine intermediate" evidence="1">
    <location>
        <position position="61"/>
    </location>
</feature>
<feature type="binding site" evidence="1">
    <location>
        <position position="11"/>
    </location>
    <ligand>
        <name>Mn(2+)</name>
        <dbReference type="ChEBI" id="CHEBI:29035"/>
        <label>2</label>
    </ligand>
</feature>
<feature type="binding site" evidence="1">
    <location>
        <position position="61"/>
    </location>
    <ligand>
        <name>Mn(2+)</name>
        <dbReference type="ChEBI" id="CHEBI:29035"/>
        <label>2</label>
    </ligand>
</feature>
<feature type="binding site" evidence="1">
    <location>
        <position position="118"/>
    </location>
    <ligand>
        <name>substrate</name>
    </ligand>
</feature>
<feature type="binding site" evidence="1">
    <location>
        <begin position="147"/>
        <end position="148"/>
    </location>
    <ligand>
        <name>substrate</name>
    </ligand>
</feature>
<feature type="binding site" evidence="1">
    <location>
        <position position="178"/>
    </location>
    <ligand>
        <name>substrate</name>
    </ligand>
</feature>
<feature type="binding site" evidence="1">
    <location>
        <position position="184"/>
    </location>
    <ligand>
        <name>substrate</name>
    </ligand>
</feature>
<feature type="binding site" evidence="1">
    <location>
        <begin position="248"/>
        <end position="251"/>
    </location>
    <ligand>
        <name>substrate</name>
    </ligand>
</feature>
<feature type="binding site" evidence="1">
    <location>
        <position position="320"/>
    </location>
    <ligand>
        <name>substrate</name>
    </ligand>
</feature>
<feature type="binding site" evidence="1">
    <location>
        <position position="386"/>
    </location>
    <ligand>
        <name>Mn(2+)</name>
        <dbReference type="ChEBI" id="CHEBI:29035"/>
        <label>1</label>
    </ligand>
</feature>
<feature type="binding site" evidence="1">
    <location>
        <position position="390"/>
    </location>
    <ligand>
        <name>Mn(2+)</name>
        <dbReference type="ChEBI" id="CHEBI:29035"/>
        <label>1</label>
    </ligand>
</feature>
<feature type="binding site" evidence="1">
    <location>
        <position position="427"/>
    </location>
    <ligand>
        <name>Mn(2+)</name>
        <dbReference type="ChEBI" id="CHEBI:29035"/>
        <label>2</label>
    </ligand>
</feature>
<feature type="binding site" evidence="1">
    <location>
        <position position="428"/>
    </location>
    <ligand>
        <name>Mn(2+)</name>
        <dbReference type="ChEBI" id="CHEBI:29035"/>
        <label>2</label>
    </ligand>
</feature>
<feature type="binding site" evidence="1">
    <location>
        <position position="445"/>
    </location>
    <ligand>
        <name>Mn(2+)</name>
        <dbReference type="ChEBI" id="CHEBI:29035"/>
        <label>1</label>
    </ligand>
</feature>
<proteinExistence type="inferred from homology"/>
<comment type="function">
    <text evidence="1">Catalyzes the interconversion of 2-phosphoglycerate and 3-phosphoglycerate.</text>
</comment>
<comment type="catalytic activity">
    <reaction evidence="1">
        <text>(2R)-2-phosphoglycerate = (2R)-3-phosphoglycerate</text>
        <dbReference type="Rhea" id="RHEA:15901"/>
        <dbReference type="ChEBI" id="CHEBI:58272"/>
        <dbReference type="ChEBI" id="CHEBI:58289"/>
        <dbReference type="EC" id="5.4.2.12"/>
    </reaction>
</comment>
<comment type="cofactor">
    <cofactor evidence="1">
        <name>Mn(2+)</name>
        <dbReference type="ChEBI" id="CHEBI:29035"/>
    </cofactor>
    <text evidence="1">Binds 2 manganese ions per subunit.</text>
</comment>
<comment type="pathway">
    <text evidence="1">Carbohydrate degradation; glycolysis; pyruvate from D-glyceraldehyde 3-phosphate: step 3/5.</text>
</comment>
<comment type="subunit">
    <text evidence="1">Monomer.</text>
</comment>
<comment type="similarity">
    <text evidence="1">Belongs to the BPG-independent phosphoglycerate mutase family.</text>
</comment>
<reference key="1">
    <citation type="submission" date="2006-12" db="EMBL/GenBank/DDBJ databases">
        <authorList>
            <person name="Fouts D.E."/>
            <person name="Nelson K.E."/>
            <person name="Sebastian Y."/>
        </authorList>
    </citation>
    <scope>NUCLEOTIDE SEQUENCE [LARGE SCALE GENOMIC DNA]</scope>
    <source>
        <strain>81-176</strain>
    </source>
</reference>
<gene>
    <name evidence="1" type="primary">gpmI</name>
    <name type="ordered locus">CJJ81176_0460</name>
</gene>
<dbReference type="EC" id="5.4.2.12" evidence="1"/>
<dbReference type="EMBL" id="CP000538">
    <property type="protein sequence ID" value="EAQ73275.1"/>
    <property type="molecule type" value="Genomic_DNA"/>
</dbReference>
<dbReference type="RefSeq" id="WP_002854970.1">
    <property type="nucleotide sequence ID" value="NC_008787.1"/>
</dbReference>
<dbReference type="SMR" id="A1VYF1"/>
<dbReference type="KEGG" id="cjj:CJJ81176_0460"/>
<dbReference type="eggNOG" id="COG0696">
    <property type="taxonomic scope" value="Bacteria"/>
</dbReference>
<dbReference type="HOGENOM" id="CLU_026099_2_0_7"/>
<dbReference type="UniPathway" id="UPA00109">
    <property type="reaction ID" value="UER00186"/>
</dbReference>
<dbReference type="Proteomes" id="UP000000646">
    <property type="component" value="Chromosome"/>
</dbReference>
<dbReference type="GO" id="GO:0005829">
    <property type="term" value="C:cytosol"/>
    <property type="evidence" value="ECO:0007669"/>
    <property type="project" value="TreeGrafter"/>
</dbReference>
<dbReference type="GO" id="GO:0030145">
    <property type="term" value="F:manganese ion binding"/>
    <property type="evidence" value="ECO:0007669"/>
    <property type="project" value="UniProtKB-UniRule"/>
</dbReference>
<dbReference type="GO" id="GO:0004619">
    <property type="term" value="F:phosphoglycerate mutase activity"/>
    <property type="evidence" value="ECO:0007669"/>
    <property type="project" value="UniProtKB-EC"/>
</dbReference>
<dbReference type="GO" id="GO:0006007">
    <property type="term" value="P:glucose catabolic process"/>
    <property type="evidence" value="ECO:0007669"/>
    <property type="project" value="InterPro"/>
</dbReference>
<dbReference type="GO" id="GO:0006096">
    <property type="term" value="P:glycolytic process"/>
    <property type="evidence" value="ECO:0007669"/>
    <property type="project" value="UniProtKB-UniRule"/>
</dbReference>
<dbReference type="CDD" id="cd16010">
    <property type="entry name" value="iPGM"/>
    <property type="match status" value="1"/>
</dbReference>
<dbReference type="FunFam" id="3.40.1450.10:FF:000002">
    <property type="entry name" value="2,3-bisphosphoglycerate-independent phosphoglycerate mutase"/>
    <property type="match status" value="1"/>
</dbReference>
<dbReference type="Gene3D" id="3.40.720.10">
    <property type="entry name" value="Alkaline Phosphatase, subunit A"/>
    <property type="match status" value="1"/>
</dbReference>
<dbReference type="Gene3D" id="3.40.1450.10">
    <property type="entry name" value="BPG-independent phosphoglycerate mutase, domain B"/>
    <property type="match status" value="1"/>
</dbReference>
<dbReference type="HAMAP" id="MF_01038">
    <property type="entry name" value="GpmI"/>
    <property type="match status" value="1"/>
</dbReference>
<dbReference type="InterPro" id="IPR017850">
    <property type="entry name" value="Alkaline_phosphatase_core_sf"/>
</dbReference>
<dbReference type="InterPro" id="IPR011258">
    <property type="entry name" value="BPG-indep_PGM_N"/>
</dbReference>
<dbReference type="InterPro" id="IPR006124">
    <property type="entry name" value="Metalloenzyme"/>
</dbReference>
<dbReference type="InterPro" id="IPR036646">
    <property type="entry name" value="PGAM_B_sf"/>
</dbReference>
<dbReference type="InterPro" id="IPR005995">
    <property type="entry name" value="Pgm_bpd_ind"/>
</dbReference>
<dbReference type="NCBIfam" id="TIGR01307">
    <property type="entry name" value="pgm_bpd_ind"/>
    <property type="match status" value="1"/>
</dbReference>
<dbReference type="PANTHER" id="PTHR31637">
    <property type="entry name" value="2,3-BISPHOSPHOGLYCERATE-INDEPENDENT PHOSPHOGLYCERATE MUTASE"/>
    <property type="match status" value="1"/>
</dbReference>
<dbReference type="PANTHER" id="PTHR31637:SF0">
    <property type="entry name" value="2,3-BISPHOSPHOGLYCERATE-INDEPENDENT PHOSPHOGLYCERATE MUTASE"/>
    <property type="match status" value="1"/>
</dbReference>
<dbReference type="Pfam" id="PF06415">
    <property type="entry name" value="iPGM_N"/>
    <property type="match status" value="1"/>
</dbReference>
<dbReference type="Pfam" id="PF01676">
    <property type="entry name" value="Metalloenzyme"/>
    <property type="match status" value="1"/>
</dbReference>
<dbReference type="PIRSF" id="PIRSF001492">
    <property type="entry name" value="IPGAM"/>
    <property type="match status" value="1"/>
</dbReference>
<dbReference type="SUPFAM" id="SSF64158">
    <property type="entry name" value="2,3-Bisphosphoglycerate-independent phosphoglycerate mutase, substrate-binding domain"/>
    <property type="match status" value="1"/>
</dbReference>
<dbReference type="SUPFAM" id="SSF53649">
    <property type="entry name" value="Alkaline phosphatase-like"/>
    <property type="match status" value="1"/>
</dbReference>
<evidence type="ECO:0000255" key="1">
    <source>
        <dbReference type="HAMAP-Rule" id="MF_01038"/>
    </source>
</evidence>